<comment type="function">
    <text evidence="1">Catalyzes the phosphorylation of the hydroxyl group of 4-methyl-5-beta-hydroxyethylthiazole (THZ).</text>
</comment>
<comment type="catalytic activity">
    <reaction evidence="1">
        <text>5-(2-hydroxyethyl)-4-methylthiazole + ATP = 4-methyl-5-(2-phosphooxyethyl)-thiazole + ADP + H(+)</text>
        <dbReference type="Rhea" id="RHEA:24212"/>
        <dbReference type="ChEBI" id="CHEBI:15378"/>
        <dbReference type="ChEBI" id="CHEBI:17957"/>
        <dbReference type="ChEBI" id="CHEBI:30616"/>
        <dbReference type="ChEBI" id="CHEBI:58296"/>
        <dbReference type="ChEBI" id="CHEBI:456216"/>
        <dbReference type="EC" id="2.7.1.50"/>
    </reaction>
</comment>
<comment type="cofactor">
    <cofactor evidence="1">
        <name>Mg(2+)</name>
        <dbReference type="ChEBI" id="CHEBI:18420"/>
    </cofactor>
</comment>
<comment type="pathway">
    <text evidence="1">Cofactor biosynthesis; thiamine diphosphate biosynthesis; 4-methyl-5-(2-phosphoethyl)-thiazole from 5-(2-hydroxyethyl)-4-methylthiazole: step 1/1.</text>
</comment>
<comment type="similarity">
    <text evidence="1">Belongs to the Thz kinase family.</text>
</comment>
<feature type="chain" id="PRO_1000198106" description="Hydroxyethylthiazole kinase">
    <location>
        <begin position="1"/>
        <end position="268"/>
    </location>
</feature>
<feature type="binding site" evidence="1">
    <location>
        <position position="45"/>
    </location>
    <ligand>
        <name>substrate</name>
    </ligand>
</feature>
<feature type="binding site" evidence="1">
    <location>
        <position position="121"/>
    </location>
    <ligand>
        <name>ATP</name>
        <dbReference type="ChEBI" id="CHEBI:30616"/>
    </ligand>
</feature>
<feature type="binding site" evidence="1">
    <location>
        <position position="167"/>
    </location>
    <ligand>
        <name>ATP</name>
        <dbReference type="ChEBI" id="CHEBI:30616"/>
    </ligand>
</feature>
<feature type="binding site" evidence="1">
    <location>
        <position position="194"/>
    </location>
    <ligand>
        <name>substrate</name>
    </ligand>
</feature>
<reference key="1">
    <citation type="submission" date="2008-10" db="EMBL/GenBank/DDBJ databases">
        <title>Genome sequence of Bacillus cereus AH820.</title>
        <authorList>
            <person name="Dodson R.J."/>
            <person name="Durkin A.S."/>
            <person name="Rosovitz M.J."/>
            <person name="Rasko D.A."/>
            <person name="Hoffmaster A."/>
            <person name="Ravel J."/>
            <person name="Sutton G."/>
        </authorList>
    </citation>
    <scope>NUCLEOTIDE SEQUENCE [LARGE SCALE GENOMIC DNA]</scope>
    <source>
        <strain>AH820</strain>
    </source>
</reference>
<evidence type="ECO:0000255" key="1">
    <source>
        <dbReference type="HAMAP-Rule" id="MF_00228"/>
    </source>
</evidence>
<organism>
    <name type="scientific">Bacillus cereus (strain AH820)</name>
    <dbReference type="NCBI Taxonomy" id="405535"/>
    <lineage>
        <taxon>Bacteria</taxon>
        <taxon>Bacillati</taxon>
        <taxon>Bacillota</taxon>
        <taxon>Bacilli</taxon>
        <taxon>Bacillales</taxon>
        <taxon>Bacillaceae</taxon>
        <taxon>Bacillus</taxon>
        <taxon>Bacillus cereus group</taxon>
    </lineage>
</organism>
<name>THIM_BACC0</name>
<dbReference type="EC" id="2.7.1.50" evidence="1"/>
<dbReference type="EMBL" id="CP001283">
    <property type="protein sequence ID" value="ACK92259.1"/>
    <property type="molecule type" value="Genomic_DNA"/>
</dbReference>
<dbReference type="RefSeq" id="WP_001092689.1">
    <property type="nucleotide sequence ID" value="NC_011773.1"/>
</dbReference>
<dbReference type="SMR" id="B7JN71"/>
<dbReference type="GeneID" id="45020435"/>
<dbReference type="KEGG" id="bcu:BCAH820_0419"/>
<dbReference type="HOGENOM" id="CLU_019943_0_1_9"/>
<dbReference type="UniPathway" id="UPA00060">
    <property type="reaction ID" value="UER00139"/>
</dbReference>
<dbReference type="Proteomes" id="UP000001363">
    <property type="component" value="Chromosome"/>
</dbReference>
<dbReference type="GO" id="GO:0005524">
    <property type="term" value="F:ATP binding"/>
    <property type="evidence" value="ECO:0007669"/>
    <property type="project" value="UniProtKB-UniRule"/>
</dbReference>
<dbReference type="GO" id="GO:0004417">
    <property type="term" value="F:hydroxyethylthiazole kinase activity"/>
    <property type="evidence" value="ECO:0007669"/>
    <property type="project" value="UniProtKB-UniRule"/>
</dbReference>
<dbReference type="GO" id="GO:0000287">
    <property type="term" value="F:magnesium ion binding"/>
    <property type="evidence" value="ECO:0007669"/>
    <property type="project" value="UniProtKB-UniRule"/>
</dbReference>
<dbReference type="GO" id="GO:0009228">
    <property type="term" value="P:thiamine biosynthetic process"/>
    <property type="evidence" value="ECO:0007669"/>
    <property type="project" value="UniProtKB-KW"/>
</dbReference>
<dbReference type="GO" id="GO:0009229">
    <property type="term" value="P:thiamine diphosphate biosynthetic process"/>
    <property type="evidence" value="ECO:0007669"/>
    <property type="project" value="UniProtKB-UniRule"/>
</dbReference>
<dbReference type="CDD" id="cd01170">
    <property type="entry name" value="THZ_kinase"/>
    <property type="match status" value="1"/>
</dbReference>
<dbReference type="FunFam" id="3.40.1190.20:FF:000027">
    <property type="entry name" value="Hydroxyethylthiazole kinase"/>
    <property type="match status" value="1"/>
</dbReference>
<dbReference type="Gene3D" id="3.40.1190.20">
    <property type="match status" value="1"/>
</dbReference>
<dbReference type="HAMAP" id="MF_00228">
    <property type="entry name" value="Thz_kinase"/>
    <property type="match status" value="1"/>
</dbReference>
<dbReference type="InterPro" id="IPR000417">
    <property type="entry name" value="Hyethyz_kinase"/>
</dbReference>
<dbReference type="InterPro" id="IPR029056">
    <property type="entry name" value="Ribokinase-like"/>
</dbReference>
<dbReference type="NCBIfam" id="NF006830">
    <property type="entry name" value="PRK09355.1"/>
    <property type="match status" value="1"/>
</dbReference>
<dbReference type="NCBIfam" id="TIGR00694">
    <property type="entry name" value="thiM"/>
    <property type="match status" value="1"/>
</dbReference>
<dbReference type="Pfam" id="PF02110">
    <property type="entry name" value="HK"/>
    <property type="match status" value="1"/>
</dbReference>
<dbReference type="PIRSF" id="PIRSF000513">
    <property type="entry name" value="Thz_kinase"/>
    <property type="match status" value="1"/>
</dbReference>
<dbReference type="PRINTS" id="PR01099">
    <property type="entry name" value="HYETHTZKNASE"/>
</dbReference>
<dbReference type="SUPFAM" id="SSF53613">
    <property type="entry name" value="Ribokinase-like"/>
    <property type="match status" value="1"/>
</dbReference>
<proteinExistence type="inferred from homology"/>
<sequence>MNTKEISKVVDLVRESNPLVHNITNVVVTNFTANGLLALGASPVMAYAKEEVAEMASIAGALVLNMGTLRPDEVEAMLLAGKSANRNDVPVLFDPVGAGATSYRTEVARHIPAEIELAIIRGNAAEIANVINEKWEIKGVDAGAGNGNVVSIAKQAADELNTVAVITGKEDVVTDGERTIVIRNGHSILTKITGTGCLLTSVIGAFVAVEKDYVKAAVAALTFYGVAAELAAAKTVEKGPGSFQIEFLNQLANTTSGDIEKYGKIEVI</sequence>
<accession>B7JN71</accession>
<keyword id="KW-0067">ATP-binding</keyword>
<keyword id="KW-0418">Kinase</keyword>
<keyword id="KW-0460">Magnesium</keyword>
<keyword id="KW-0479">Metal-binding</keyword>
<keyword id="KW-0547">Nucleotide-binding</keyword>
<keyword id="KW-0784">Thiamine biosynthesis</keyword>
<keyword id="KW-0808">Transferase</keyword>
<protein>
    <recommendedName>
        <fullName evidence="1">Hydroxyethylthiazole kinase</fullName>
        <ecNumber evidence="1">2.7.1.50</ecNumber>
    </recommendedName>
    <alternativeName>
        <fullName evidence="1">4-methyl-5-beta-hydroxyethylthiazole kinase</fullName>
        <shortName evidence="1">TH kinase</shortName>
        <shortName evidence="1">Thz kinase</shortName>
    </alternativeName>
</protein>
<gene>
    <name evidence="1" type="primary">thiM</name>
    <name type="ordered locus">BCAH820_0419</name>
</gene>